<protein>
    <recommendedName>
        <fullName evidence="1">Small ribosomal subunit protein eS8</fullName>
    </recommendedName>
    <alternativeName>
        <fullName evidence="3">30S ribosomal protein S8e</fullName>
    </alternativeName>
</protein>
<organism>
    <name type="scientific">Saccharolobus islandicus (strain L.S.2.15 / Lassen #1)</name>
    <name type="common">Sulfolobus islandicus</name>
    <dbReference type="NCBI Taxonomy" id="429572"/>
    <lineage>
        <taxon>Archaea</taxon>
        <taxon>Thermoproteota</taxon>
        <taxon>Thermoprotei</taxon>
        <taxon>Sulfolobales</taxon>
        <taxon>Sulfolobaceae</taxon>
        <taxon>Saccharolobus</taxon>
    </lineage>
</organism>
<keyword id="KW-0687">Ribonucleoprotein</keyword>
<keyword id="KW-0689">Ribosomal protein</keyword>
<dbReference type="EMBL" id="CP001399">
    <property type="protein sequence ID" value="ACP36129.1"/>
    <property type="molecule type" value="Genomic_DNA"/>
</dbReference>
<dbReference type="RefSeq" id="WP_012714112.1">
    <property type="nucleotide sequence ID" value="NC_012589.1"/>
</dbReference>
<dbReference type="BMRB" id="C3MJ42"/>
<dbReference type="SMR" id="C3MJ42"/>
<dbReference type="KEGG" id="sis:LS215_2141"/>
<dbReference type="HOGENOM" id="CLU_080597_2_1_2"/>
<dbReference type="OrthoDB" id="372305at2157"/>
<dbReference type="Proteomes" id="UP000001747">
    <property type="component" value="Chromosome"/>
</dbReference>
<dbReference type="GO" id="GO:1990904">
    <property type="term" value="C:ribonucleoprotein complex"/>
    <property type="evidence" value="ECO:0007669"/>
    <property type="project" value="UniProtKB-KW"/>
</dbReference>
<dbReference type="GO" id="GO:0005840">
    <property type="term" value="C:ribosome"/>
    <property type="evidence" value="ECO:0007669"/>
    <property type="project" value="UniProtKB-KW"/>
</dbReference>
<dbReference type="GO" id="GO:0003735">
    <property type="term" value="F:structural constituent of ribosome"/>
    <property type="evidence" value="ECO:0007669"/>
    <property type="project" value="InterPro"/>
</dbReference>
<dbReference type="GO" id="GO:0006412">
    <property type="term" value="P:translation"/>
    <property type="evidence" value="ECO:0007669"/>
    <property type="project" value="UniProtKB-UniRule"/>
</dbReference>
<dbReference type="CDD" id="cd11382">
    <property type="entry name" value="Ribosomal_S8e"/>
    <property type="match status" value="1"/>
</dbReference>
<dbReference type="FunFam" id="2.40.10.310:FF:000002">
    <property type="entry name" value="30S ribosomal protein S8e"/>
    <property type="match status" value="1"/>
</dbReference>
<dbReference type="Gene3D" id="2.40.10.310">
    <property type="match status" value="1"/>
</dbReference>
<dbReference type="HAMAP" id="MF_00029">
    <property type="entry name" value="Ribosomal_eS8"/>
    <property type="match status" value="1"/>
</dbReference>
<dbReference type="InterPro" id="IPR001047">
    <property type="entry name" value="Ribosomal_eS8"/>
</dbReference>
<dbReference type="InterPro" id="IPR018283">
    <property type="entry name" value="Ribosomal_eS8_CS"/>
</dbReference>
<dbReference type="InterPro" id="IPR020919">
    <property type="entry name" value="Ribosomal_protein_eS8_arc"/>
</dbReference>
<dbReference type="InterPro" id="IPR022309">
    <property type="entry name" value="Ribosomal_Se8/biogenesis_NSA2"/>
</dbReference>
<dbReference type="NCBIfam" id="TIGR00307">
    <property type="entry name" value="eS8"/>
    <property type="match status" value="1"/>
</dbReference>
<dbReference type="PANTHER" id="PTHR10394">
    <property type="entry name" value="40S RIBOSOMAL PROTEIN S8"/>
    <property type="match status" value="1"/>
</dbReference>
<dbReference type="Pfam" id="PF01201">
    <property type="entry name" value="Ribosomal_S8e"/>
    <property type="match status" value="1"/>
</dbReference>
<dbReference type="PROSITE" id="PS01193">
    <property type="entry name" value="RIBOSOMAL_S8E"/>
    <property type="match status" value="1"/>
</dbReference>
<comment type="subunit">
    <text evidence="1">Part of the 30S ribosomal subunit.</text>
</comment>
<comment type="similarity">
    <text evidence="1">Belongs to the eukaryotic ribosomal protein eS8 family.</text>
</comment>
<proteinExistence type="inferred from homology"/>
<feature type="chain" id="PRO_1000201976" description="Small ribosomal subunit protein eS8">
    <location>
        <begin position="1"/>
        <end position="133"/>
    </location>
</feature>
<feature type="region of interest" description="Disordered" evidence="2">
    <location>
        <begin position="1"/>
        <end position="22"/>
    </location>
</feature>
<name>RS8E_SACI2</name>
<sequence>MGFYQGPDNRKITGGLKGKHRDKRKYEIGNPSTLTTLSAEDIRIKDRTLGGNFKVRLKYTTTANVLDPATNTAKKVKILEVLETPANKELARRGIIIRGAKIRTEAGLAVVTSRPGQDGVINAVLLKNESQGS</sequence>
<gene>
    <name evidence="1" type="primary">rps8e</name>
    <name type="ordered locus">LS215_2141</name>
</gene>
<evidence type="ECO:0000255" key="1">
    <source>
        <dbReference type="HAMAP-Rule" id="MF_00029"/>
    </source>
</evidence>
<evidence type="ECO:0000256" key="2">
    <source>
        <dbReference type="SAM" id="MobiDB-lite"/>
    </source>
</evidence>
<evidence type="ECO:0000305" key="3"/>
<reference key="1">
    <citation type="journal article" date="2009" name="Proc. Natl. Acad. Sci. U.S.A.">
        <title>Biogeography of the Sulfolobus islandicus pan-genome.</title>
        <authorList>
            <person name="Reno M.L."/>
            <person name="Held N.L."/>
            <person name="Fields C.J."/>
            <person name="Burke P.V."/>
            <person name="Whitaker R.J."/>
        </authorList>
    </citation>
    <scope>NUCLEOTIDE SEQUENCE [LARGE SCALE GENOMIC DNA]</scope>
    <source>
        <strain>L.S.2.15 / Lassen #1</strain>
    </source>
</reference>
<accession>C3MJ42</accession>